<evidence type="ECO:0000250" key="1"/>
<evidence type="ECO:0000250" key="2">
    <source>
        <dbReference type="UniProtKB" id="P08034"/>
    </source>
</evidence>
<evidence type="ECO:0000255" key="3"/>
<evidence type="ECO:0000305" key="4"/>
<evidence type="ECO:0007744" key="5">
    <source>
    </source>
</evidence>
<evidence type="ECO:0007744" key="6">
    <source>
    </source>
</evidence>
<organism>
    <name type="scientific">Rattus norvegicus</name>
    <name type="common">Rat</name>
    <dbReference type="NCBI Taxonomy" id="10116"/>
    <lineage>
        <taxon>Eukaryota</taxon>
        <taxon>Metazoa</taxon>
        <taxon>Chordata</taxon>
        <taxon>Craniata</taxon>
        <taxon>Vertebrata</taxon>
        <taxon>Euteleostomi</taxon>
        <taxon>Mammalia</taxon>
        <taxon>Eutheria</taxon>
        <taxon>Euarchontoglires</taxon>
        <taxon>Glires</taxon>
        <taxon>Rodentia</taxon>
        <taxon>Myomorpha</taxon>
        <taxon>Muroidea</taxon>
        <taxon>Muridae</taxon>
        <taxon>Murinae</taxon>
        <taxon>Rattus</taxon>
    </lineage>
</organism>
<dbReference type="EMBL" id="X04070">
    <property type="protein sequence ID" value="CAA27705.1"/>
    <property type="molecule type" value="mRNA"/>
</dbReference>
<dbReference type="EMBL" id="X04303">
    <property type="protein sequence ID" value="CAA27846.1"/>
    <property type="molecule type" value="mRNA"/>
</dbReference>
<dbReference type="EMBL" id="M23565">
    <property type="protein sequence ID" value="AAA81569.1"/>
    <property type="molecule type" value="Genomic_DNA"/>
</dbReference>
<dbReference type="EMBL" id="BC078868">
    <property type="protein sequence ID" value="AAH78868.1"/>
    <property type="molecule type" value="mRNA"/>
</dbReference>
<dbReference type="EMBL" id="AH003192">
    <property type="protein sequence ID" value="AAA75195.1"/>
    <property type="molecule type" value="Genomic_DNA"/>
</dbReference>
<dbReference type="PIR" id="A92745">
    <property type="entry name" value="GJRT"/>
</dbReference>
<dbReference type="PIR" id="I52552">
    <property type="entry name" value="I52552"/>
</dbReference>
<dbReference type="RefSeq" id="NP_058947.1">
    <property type="nucleotide sequence ID" value="NM_017251.2"/>
</dbReference>
<dbReference type="RefSeq" id="XP_008771477.1">
    <property type="nucleotide sequence ID" value="XM_008773255.4"/>
</dbReference>
<dbReference type="RefSeq" id="XP_017457434.1">
    <property type="nucleotide sequence ID" value="XM_017601945.3"/>
</dbReference>
<dbReference type="SMR" id="P08033"/>
<dbReference type="BioGRID" id="248217">
    <property type="interactions" value="1"/>
</dbReference>
<dbReference type="FunCoup" id="P08033">
    <property type="interactions" value="60"/>
</dbReference>
<dbReference type="IntAct" id="P08033">
    <property type="interactions" value="2"/>
</dbReference>
<dbReference type="STRING" id="10116.ENSRNOP00000068248"/>
<dbReference type="TCDB" id="1.A.24.1.2">
    <property type="family name" value="the gap junction-forming connexin (connexin) family"/>
</dbReference>
<dbReference type="iPTMnet" id="P08033"/>
<dbReference type="PhosphoSitePlus" id="P08033"/>
<dbReference type="PaxDb" id="10116-ENSRNOP00000068248"/>
<dbReference type="Ensembl" id="ENSRNOT00000095443.1">
    <property type="protein sequence ID" value="ENSRNOP00000083358.1"/>
    <property type="gene ID" value="ENSRNOG00000063213.1"/>
</dbReference>
<dbReference type="GeneID" id="29584"/>
<dbReference type="KEGG" id="rno:29584"/>
<dbReference type="AGR" id="RGD:61926"/>
<dbReference type="CTD" id="2705"/>
<dbReference type="RGD" id="61926">
    <property type="gene designation" value="Gjb1"/>
</dbReference>
<dbReference type="eggNOG" id="ENOG502R1QN">
    <property type="taxonomic scope" value="Eukaryota"/>
</dbReference>
<dbReference type="GeneTree" id="ENSGT01030000234513"/>
<dbReference type="HOGENOM" id="CLU_037388_4_1_1"/>
<dbReference type="InParanoid" id="P08033"/>
<dbReference type="OMA" id="CIILNMA"/>
<dbReference type="OrthoDB" id="8934037at2759"/>
<dbReference type="PhylomeDB" id="P08033"/>
<dbReference type="TreeFam" id="TF329606"/>
<dbReference type="Reactome" id="R-RNO-190704">
    <property type="pathway name" value="Oligomerization of connexins into connexons"/>
</dbReference>
<dbReference type="PRO" id="PR:P08033"/>
<dbReference type="Proteomes" id="UP000002494">
    <property type="component" value="Chromosome X"/>
</dbReference>
<dbReference type="Bgee" id="ENSRNOG00000003746">
    <property type="expression patterns" value="Expressed in liver and 17 other cell types or tissues"/>
</dbReference>
<dbReference type="ExpressionAtlas" id="P08033">
    <property type="expression patterns" value="baseline and differential"/>
</dbReference>
<dbReference type="GO" id="GO:0005922">
    <property type="term" value="C:connexin complex"/>
    <property type="evidence" value="ECO:0000318"/>
    <property type="project" value="GO_Central"/>
</dbReference>
<dbReference type="GO" id="GO:0005737">
    <property type="term" value="C:cytoplasm"/>
    <property type="evidence" value="ECO:0000266"/>
    <property type="project" value="RGD"/>
</dbReference>
<dbReference type="GO" id="GO:0005921">
    <property type="term" value="C:gap junction"/>
    <property type="evidence" value="ECO:0000314"/>
    <property type="project" value="RGD"/>
</dbReference>
<dbReference type="GO" id="GO:0016328">
    <property type="term" value="C:lateral plasma membrane"/>
    <property type="evidence" value="ECO:0000314"/>
    <property type="project" value="RGD"/>
</dbReference>
<dbReference type="GO" id="GO:0005886">
    <property type="term" value="C:plasma membrane"/>
    <property type="evidence" value="ECO:0000266"/>
    <property type="project" value="RGD"/>
</dbReference>
<dbReference type="GO" id="GO:0032991">
    <property type="term" value="C:protein-containing complex"/>
    <property type="evidence" value="ECO:0000314"/>
    <property type="project" value="RGD"/>
</dbReference>
<dbReference type="GO" id="GO:0005243">
    <property type="term" value="F:gap junction channel activity"/>
    <property type="evidence" value="ECO:0000314"/>
    <property type="project" value="RGD"/>
</dbReference>
<dbReference type="GO" id="GO:0042802">
    <property type="term" value="F:identical protein binding"/>
    <property type="evidence" value="ECO:0000266"/>
    <property type="project" value="RGD"/>
</dbReference>
<dbReference type="GO" id="GO:0007267">
    <property type="term" value="P:cell-cell signaling"/>
    <property type="evidence" value="ECO:0000318"/>
    <property type="project" value="GO_Central"/>
</dbReference>
<dbReference type="GO" id="GO:1905867">
    <property type="term" value="P:epididymis development"/>
    <property type="evidence" value="ECO:0000270"/>
    <property type="project" value="RGD"/>
</dbReference>
<dbReference type="GO" id="GO:0015868">
    <property type="term" value="P:purine ribonucleotide transport"/>
    <property type="evidence" value="ECO:0000314"/>
    <property type="project" value="RGD"/>
</dbReference>
<dbReference type="DisProt" id="DP01176"/>
<dbReference type="FunFam" id="1.20.1440.80:FF:000001">
    <property type="entry name" value="Gap junction alpha-1"/>
    <property type="match status" value="1"/>
</dbReference>
<dbReference type="Gene3D" id="1.20.1440.80">
    <property type="entry name" value="Gap junction channel protein cysteine-rich domain"/>
    <property type="match status" value="1"/>
</dbReference>
<dbReference type="InterPro" id="IPR000500">
    <property type="entry name" value="Connexin"/>
</dbReference>
<dbReference type="InterPro" id="IPR002267">
    <property type="entry name" value="Connexin32"/>
</dbReference>
<dbReference type="InterPro" id="IPR019570">
    <property type="entry name" value="Connexin_CCC"/>
</dbReference>
<dbReference type="InterPro" id="IPR017990">
    <property type="entry name" value="Connexin_CS"/>
</dbReference>
<dbReference type="InterPro" id="IPR013092">
    <property type="entry name" value="Connexin_N"/>
</dbReference>
<dbReference type="InterPro" id="IPR038359">
    <property type="entry name" value="Connexin_N_sf"/>
</dbReference>
<dbReference type="PANTHER" id="PTHR11984">
    <property type="entry name" value="CONNEXIN"/>
    <property type="match status" value="1"/>
</dbReference>
<dbReference type="PANTHER" id="PTHR11984:SF20">
    <property type="entry name" value="GAP JUNCTION BETA-1 PROTEIN"/>
    <property type="match status" value="1"/>
</dbReference>
<dbReference type="Pfam" id="PF00029">
    <property type="entry name" value="Connexin"/>
    <property type="match status" value="1"/>
</dbReference>
<dbReference type="PRINTS" id="PR00206">
    <property type="entry name" value="CONNEXIN"/>
</dbReference>
<dbReference type="PRINTS" id="PR01138">
    <property type="entry name" value="CONNEXINB1"/>
</dbReference>
<dbReference type="SMART" id="SM00037">
    <property type="entry name" value="CNX"/>
    <property type="match status" value="1"/>
</dbReference>
<dbReference type="SMART" id="SM01089">
    <property type="entry name" value="Connexin_CCC"/>
    <property type="match status" value="1"/>
</dbReference>
<dbReference type="PROSITE" id="PS00407">
    <property type="entry name" value="CONNEXINS_1"/>
    <property type="match status" value="1"/>
</dbReference>
<dbReference type="PROSITE" id="PS00408">
    <property type="entry name" value="CONNEXINS_2"/>
    <property type="match status" value="1"/>
</dbReference>
<keyword id="KW-0965">Cell junction</keyword>
<keyword id="KW-1003">Cell membrane</keyword>
<keyword id="KW-0903">Direct protein sequencing</keyword>
<keyword id="KW-0303">Gap junction</keyword>
<keyword id="KW-0472">Membrane</keyword>
<keyword id="KW-0597">Phosphoprotein</keyword>
<keyword id="KW-1185">Reference proteome</keyword>
<keyword id="KW-0812">Transmembrane</keyword>
<keyword id="KW-1133">Transmembrane helix</keyword>
<accession>P08033</accession>
<reference key="1">
    <citation type="journal article" date="1986" name="J. Cell Biol.">
        <title>Molecular cloning of cDNA for rat liver gap junction protein.</title>
        <authorList>
            <person name="Paul D.L."/>
        </authorList>
    </citation>
    <scope>NUCLEOTIDE SEQUENCE [MRNA]</scope>
    <source>
        <tissue>Liver</tissue>
    </source>
</reference>
<reference key="2">
    <citation type="journal article" date="2004" name="Genome Res.">
        <title>The status, quality, and expansion of the NIH full-length cDNA project: the Mammalian Gene Collection (MGC).</title>
        <authorList>
            <consortium name="The MGC Project Team"/>
        </authorList>
    </citation>
    <scope>NUCLEOTIDE SEQUENCE [LARGE SCALE MRNA]</scope>
    <source>
        <tissue>Kidney</tissue>
    </source>
</reference>
<reference key="3">
    <citation type="journal article" date="1986" name="FEBS Lett.">
        <title>Identification of a rat liver cDNA and mRNA coding for the 28 kDa gap junction protein.</title>
        <authorList>
            <person name="Heynkes R."/>
            <person name="Kozjek G."/>
            <person name="Traub O."/>
            <person name="Willecke K."/>
        </authorList>
    </citation>
    <scope>NUCLEOTIDE SEQUENCE [MRNA] OF 7-119</scope>
    <source>
        <tissue>Liver</tissue>
    </source>
</reference>
<reference key="4">
    <citation type="journal article" date="1985" name="J. Biol. Chem.">
        <title>The Mr 28,000 gap junction proteins from rat heart and liver are different but related.</title>
        <authorList>
            <person name="Nicholson B.J."/>
            <person name="Gros D.B."/>
            <person name="Kent S.B.H."/>
            <person name="Hood L.E."/>
            <person name="Revel J.-P."/>
        </authorList>
    </citation>
    <scope>PROTEIN SEQUENCE OF 1-40</scope>
</reference>
<reference key="5">
    <citation type="journal article" date="1988" name="Biosci. Rep.">
        <title>Structure of a gap junction gene: rat connexin-32.</title>
        <authorList>
            <person name="Miller T."/>
            <person name="Dahl G."/>
            <person name="Werner R."/>
        </authorList>
    </citation>
    <scope>NUCLEOTIDE SEQUENCE [GENOMIC DNA] OF 1-39</scope>
    <source>
        <strain>Sprague-Dawley</strain>
    </source>
</reference>
<reference key="6">
    <citation type="journal article" date="1987" name="J. Biol. Chem.">
        <title>Topological analysis of the major protein in isolated intact rat liver gap junctions and gap junction-derived single membrane structures.</title>
        <authorList>
            <person name="Zimmer D.B."/>
            <person name="Green C.R."/>
            <person name="Evans W.H."/>
            <person name="Gilula N.B."/>
        </authorList>
    </citation>
    <scope>TOPOLOGY</scope>
</reference>
<reference key="7">
    <citation type="journal article" date="1991" name="J. Cell Sci.">
        <title>Topography of connexin32 in rat liver gap junctions. Evidence for an intramolecular disulphide linkage connecting the two extracellular peptide loops.</title>
        <authorList>
            <person name="Rahman S."/>
            <person name="Evans W.H."/>
        </authorList>
    </citation>
    <scope>TOPOLOGY</scope>
</reference>
<reference key="8">
    <citation type="journal article" date="2006" name="J. Proteome Res.">
        <title>Phosphoproteomic analysis of rat liver by high capacity IMAC and LC-MS/MS.</title>
        <authorList>
            <person name="Moser K."/>
            <person name="White F.M."/>
        </authorList>
    </citation>
    <scope>PHOSPHORYLATION [LARGE SCALE ANALYSIS] AT SER-266</scope>
    <scope>IDENTIFICATION BY MASS SPECTROMETRY [LARGE SCALE ANALYSIS]</scope>
</reference>
<reference key="9">
    <citation type="journal article" date="2012" name="Nat. Commun.">
        <title>Quantitative maps of protein phosphorylation sites across 14 different rat organs and tissues.</title>
        <authorList>
            <person name="Lundby A."/>
            <person name="Secher A."/>
            <person name="Lage K."/>
            <person name="Nordsborg N.B."/>
            <person name="Dmytriyev A."/>
            <person name="Lundby C."/>
            <person name="Olsen J.V."/>
        </authorList>
    </citation>
    <scope>PHOSPHORYLATION [LARGE SCALE ANALYSIS] AT SER-233; SER-258 AND SER-266</scope>
    <scope>IDENTIFICATION BY MASS SPECTROMETRY [LARGE SCALE ANALYSIS]</scope>
</reference>
<comment type="function">
    <text>One gap junction consists of a cluster of closely packed pairs of transmembrane channels, the connexons, through which materials of low MW diffuse from one cell to a neighboring cell.</text>
</comment>
<comment type="subunit">
    <text evidence="1">A connexon is composed of a hexamer of connexins. Interacts with CNST (By similarity).</text>
</comment>
<comment type="subcellular location">
    <subcellularLocation>
        <location>Cell membrane</location>
        <topology>Multi-pass membrane protein</topology>
    </subcellularLocation>
    <subcellularLocation>
        <location>Cell junction</location>
        <location>Gap junction</location>
    </subcellularLocation>
</comment>
<comment type="similarity">
    <text evidence="4">Belongs to the connexin family. Beta-type (group I) subfamily.</text>
</comment>
<proteinExistence type="evidence at protein level"/>
<gene>
    <name type="primary">Gjb1</name>
    <name type="synonym">Cxn-32</name>
</gene>
<feature type="chain" id="PRO_0000057852" description="Gap junction beta-1 protein">
    <location>
        <begin position="1"/>
        <end position="283"/>
    </location>
</feature>
<feature type="topological domain" description="Cytoplasmic" evidence="3">
    <location>
        <begin position="1"/>
        <end position="22"/>
    </location>
</feature>
<feature type="transmembrane region" description="Helical" evidence="3">
    <location>
        <begin position="23"/>
        <end position="45"/>
    </location>
</feature>
<feature type="topological domain" description="Extracellular" evidence="3">
    <location>
        <begin position="46"/>
        <end position="75"/>
    </location>
</feature>
<feature type="transmembrane region" description="Helical" evidence="3">
    <location>
        <begin position="76"/>
        <end position="95"/>
    </location>
</feature>
<feature type="topological domain" description="Cytoplasmic" evidence="3">
    <location>
        <begin position="96"/>
        <end position="130"/>
    </location>
</feature>
<feature type="transmembrane region" description="Helical" evidence="3">
    <location>
        <begin position="131"/>
        <end position="153"/>
    </location>
</feature>
<feature type="topological domain" description="Extracellular" evidence="3">
    <location>
        <begin position="154"/>
        <end position="191"/>
    </location>
</feature>
<feature type="transmembrane region" description="Helical" evidence="3">
    <location>
        <begin position="192"/>
        <end position="214"/>
    </location>
</feature>
<feature type="topological domain" description="Cytoplasmic" evidence="3">
    <location>
        <begin position="215"/>
        <end position="283"/>
    </location>
</feature>
<feature type="modified residue" description="Phosphoserine" evidence="6">
    <location>
        <position position="233"/>
    </location>
</feature>
<feature type="modified residue" description="Phosphoserine" evidence="6">
    <location>
        <position position="258"/>
    </location>
</feature>
<feature type="modified residue" description="Phosphoserine" evidence="5 6">
    <location>
        <position position="266"/>
    </location>
</feature>
<feature type="modified residue" description="Phosphoserine" evidence="2">
    <location>
        <position position="277"/>
    </location>
</feature>
<name>CXB1_RAT</name>
<sequence length="283" mass="32004">MNWTGLYTLLSGVNRHSTAIGRVWLSVIFIFRIMVLVVAAESVWGDEKSSFICNTLQPGCNSVCYDHFFPISHVRLWSLQLILVSTPALLVAMHVAHQQHIEKKMLRLEGHGDPLHLEEVKRHKVHISGTLWWTYVISVVFRLLFEAVFMYVFYLLYPGYAMVRLVKCEAFPCPNTVDCFVSRPTEKTVFTVFMLAASGICIILNVAEVVYLIIRACARRAQRRSNPPSRKGSGFGHRLSPEYKQNEINKLLSEQDGSLKDILRRSPGTGAGLAEKSDRCSAC</sequence>
<protein>
    <recommendedName>
        <fullName>Gap junction beta-1 protein</fullName>
    </recommendedName>
    <alternativeName>
        <fullName>Connexin-32</fullName>
        <shortName>Cx32</shortName>
    </alternativeName>
    <alternativeName>
        <fullName>GAP junction 28 kDa liver protein</fullName>
    </alternativeName>
</protein>